<reference key="1">
    <citation type="submission" date="2008-10" db="EMBL/GenBank/DDBJ databases">
        <title>Genome sequence of Bacillus cereus AH187.</title>
        <authorList>
            <person name="Dodson R.J."/>
            <person name="Durkin A.S."/>
            <person name="Rosovitz M.J."/>
            <person name="Rasko D.A."/>
            <person name="Kolsto A.B."/>
            <person name="Okstad O.A."/>
            <person name="Ravel J."/>
            <person name="Sutton G."/>
        </authorList>
    </citation>
    <scope>NUCLEOTIDE SEQUENCE [LARGE SCALE GENOMIC DNA]</scope>
    <source>
        <strain>AH187</strain>
    </source>
</reference>
<keyword id="KW-0067">ATP-binding</keyword>
<keyword id="KW-0418">Kinase</keyword>
<keyword id="KW-0547">Nucleotide-binding</keyword>
<keyword id="KW-0723">Serine/threonine-protein kinase</keyword>
<keyword id="KW-0808">Transferase</keyword>
<accession>B7HYQ6</accession>
<feature type="chain" id="PRO_1000130817" description="Serine-protein kinase RsbW">
    <location>
        <begin position="1"/>
        <end position="160"/>
    </location>
</feature>
<dbReference type="EC" id="2.7.11.1" evidence="1"/>
<dbReference type="EMBL" id="CP001177">
    <property type="protein sequence ID" value="ACJ77490.1"/>
    <property type="molecule type" value="Genomic_DNA"/>
</dbReference>
<dbReference type="SMR" id="B7HYQ6"/>
<dbReference type="KEGG" id="bcr:BCAH187_A1158"/>
<dbReference type="HOGENOM" id="CLU_090336_11_1_9"/>
<dbReference type="Proteomes" id="UP000002214">
    <property type="component" value="Chromosome"/>
</dbReference>
<dbReference type="GO" id="GO:0005524">
    <property type="term" value="F:ATP binding"/>
    <property type="evidence" value="ECO:0007669"/>
    <property type="project" value="UniProtKB-KW"/>
</dbReference>
<dbReference type="GO" id="GO:0106310">
    <property type="term" value="F:protein serine kinase activity"/>
    <property type="evidence" value="ECO:0007669"/>
    <property type="project" value="RHEA"/>
</dbReference>
<dbReference type="GO" id="GO:0004674">
    <property type="term" value="F:protein serine/threonine kinase activity"/>
    <property type="evidence" value="ECO:0007669"/>
    <property type="project" value="UniProtKB-KW"/>
</dbReference>
<dbReference type="GO" id="GO:0016989">
    <property type="term" value="F:sigma factor antagonist activity"/>
    <property type="evidence" value="ECO:0007669"/>
    <property type="project" value="InterPro"/>
</dbReference>
<dbReference type="CDD" id="cd16936">
    <property type="entry name" value="HATPase_RsbW-like"/>
    <property type="match status" value="1"/>
</dbReference>
<dbReference type="FunFam" id="3.30.565.10:FF:000026">
    <property type="entry name" value="Serine-protein kinase RsbW"/>
    <property type="match status" value="1"/>
</dbReference>
<dbReference type="Gene3D" id="3.30.565.10">
    <property type="entry name" value="Histidine kinase-like ATPase, C-terminal domain"/>
    <property type="match status" value="1"/>
</dbReference>
<dbReference type="HAMAP" id="MF_00638">
    <property type="entry name" value="Anti_sigma_B"/>
    <property type="match status" value="1"/>
</dbReference>
<dbReference type="InterPro" id="IPR050267">
    <property type="entry name" value="Anti-sigma-factor_SerPK"/>
</dbReference>
<dbReference type="InterPro" id="IPR036890">
    <property type="entry name" value="HATPase_C_sf"/>
</dbReference>
<dbReference type="InterPro" id="IPR010193">
    <property type="entry name" value="RsbW"/>
</dbReference>
<dbReference type="NCBIfam" id="NF003144">
    <property type="entry name" value="PRK04069.1"/>
    <property type="match status" value="1"/>
</dbReference>
<dbReference type="NCBIfam" id="TIGR01924">
    <property type="entry name" value="rsbW_low_gc"/>
    <property type="match status" value="1"/>
</dbReference>
<dbReference type="PANTHER" id="PTHR35526">
    <property type="entry name" value="ANTI-SIGMA-F FACTOR RSBW-RELATED"/>
    <property type="match status" value="1"/>
</dbReference>
<dbReference type="PANTHER" id="PTHR35526:SF9">
    <property type="entry name" value="SERINE-PROTEIN KINASE RSBW"/>
    <property type="match status" value="1"/>
</dbReference>
<dbReference type="Pfam" id="PF13581">
    <property type="entry name" value="HATPase_c_2"/>
    <property type="match status" value="1"/>
</dbReference>
<dbReference type="SUPFAM" id="SSF55874">
    <property type="entry name" value="ATPase domain of HSP90 chaperone/DNA topoisomerase II/histidine kinase"/>
    <property type="match status" value="1"/>
</dbReference>
<evidence type="ECO:0000255" key="1">
    <source>
        <dbReference type="HAMAP-Rule" id="MF_00638"/>
    </source>
</evidence>
<gene>
    <name evidence="1" type="primary">rsbW</name>
    <name type="ordered locus">BCAH187_A1158</name>
</gene>
<name>RSBW_BACC7</name>
<protein>
    <recommendedName>
        <fullName evidence="1">Serine-protein kinase RsbW</fullName>
        <ecNumber evidence="1">2.7.11.1</ecNumber>
    </recommendedName>
    <alternativeName>
        <fullName evidence="1">Anti-sigma-B factor</fullName>
    </alternativeName>
    <alternativeName>
        <fullName evidence="1">Sigma-B negative effector RsbW</fullName>
    </alternativeName>
</protein>
<proteinExistence type="inferred from homology"/>
<comment type="function">
    <text evidence="1">Negative regulator of sigma-B activity. Phosphorylates and inactivates its specific antagonist protein, RsbV. Upon phosphorylation of RsbV, RsbW is released and binds to sigma-B, thereby blocking its ability to form an RNA polymerase holoenzyme (E-sigma-B).</text>
</comment>
<comment type="catalytic activity">
    <reaction evidence="1">
        <text>L-seryl-[protein] + ATP = O-phospho-L-seryl-[protein] + ADP + H(+)</text>
        <dbReference type="Rhea" id="RHEA:17989"/>
        <dbReference type="Rhea" id="RHEA-COMP:9863"/>
        <dbReference type="Rhea" id="RHEA-COMP:11604"/>
        <dbReference type="ChEBI" id="CHEBI:15378"/>
        <dbReference type="ChEBI" id="CHEBI:29999"/>
        <dbReference type="ChEBI" id="CHEBI:30616"/>
        <dbReference type="ChEBI" id="CHEBI:83421"/>
        <dbReference type="ChEBI" id="CHEBI:456216"/>
        <dbReference type="EC" id="2.7.11.1"/>
    </reaction>
</comment>
<comment type="catalytic activity">
    <reaction evidence="1">
        <text>L-threonyl-[protein] + ATP = O-phospho-L-threonyl-[protein] + ADP + H(+)</text>
        <dbReference type="Rhea" id="RHEA:46608"/>
        <dbReference type="Rhea" id="RHEA-COMP:11060"/>
        <dbReference type="Rhea" id="RHEA-COMP:11605"/>
        <dbReference type="ChEBI" id="CHEBI:15378"/>
        <dbReference type="ChEBI" id="CHEBI:30013"/>
        <dbReference type="ChEBI" id="CHEBI:30616"/>
        <dbReference type="ChEBI" id="CHEBI:61977"/>
        <dbReference type="ChEBI" id="CHEBI:456216"/>
        <dbReference type="EC" id="2.7.11.1"/>
    </reaction>
</comment>
<comment type="similarity">
    <text evidence="1">Belongs to the anti-sigma-factor family.</text>
</comment>
<organism>
    <name type="scientific">Bacillus cereus (strain AH187)</name>
    <dbReference type="NCBI Taxonomy" id="405534"/>
    <lineage>
        <taxon>Bacteria</taxon>
        <taxon>Bacillati</taxon>
        <taxon>Bacillota</taxon>
        <taxon>Bacilli</taxon>
        <taxon>Bacillales</taxon>
        <taxon>Bacillaceae</taxon>
        <taxon>Bacillus</taxon>
        <taxon>Bacillus cereus group</taxon>
    </lineage>
</organism>
<sequence length="160" mass="18197">MMERFEKIEMKIPAKAEYVAIIRLTMAGVANRTGFAYDDIEDMKIAISEACTNIVQHAYKEDVGEIAIVFGLYEDRLEIMVADNGVSFDFNNLRSKVGPYDISKPVEHLPENGLGLYLINTLMDDIQIMHDEGMTVLMTKYIQREQVENDGNPISTYNSY</sequence>